<sequence length="252" mass="27098">MLAKRIIPCLDVDKGRVVKGVNFVNLIDAGDPVEIASVYDKEGADELVFLDITASSEDRNIILDVVKKTAETVFMPLTVGGGVRSLEDIRKLLENGADKVSINTAAVKNPSLVENAAIRFGSSTIVVAIDAKKVGENKWEVYIHGGRTPTGIDAIEWAKAVESLGAGEILLTSMDKDGTKSGYDIELTKAVSEAVKIPVIASGGAGNVQHFYEAFEYGKADACLAASLFHFKEIEISELKNYLKNKGINVRL</sequence>
<name>HIS6_SULSY</name>
<feature type="chain" id="PRO_1000135052" description="Imidazole glycerol phosphate synthase subunit HisF">
    <location>
        <begin position="1"/>
        <end position="252"/>
    </location>
</feature>
<feature type="active site" evidence="1">
    <location>
        <position position="11"/>
    </location>
</feature>
<feature type="active site" evidence="1">
    <location>
        <position position="130"/>
    </location>
</feature>
<organism>
    <name type="scientific">Sulfurihydrogenibium sp. (strain YO3AOP1)</name>
    <dbReference type="NCBI Taxonomy" id="436114"/>
    <lineage>
        <taxon>Bacteria</taxon>
        <taxon>Pseudomonadati</taxon>
        <taxon>Aquificota</taxon>
        <taxon>Aquificia</taxon>
        <taxon>Aquificales</taxon>
        <taxon>Hydrogenothermaceae</taxon>
        <taxon>Sulfurihydrogenibium</taxon>
    </lineage>
</organism>
<keyword id="KW-0028">Amino-acid biosynthesis</keyword>
<keyword id="KW-0963">Cytoplasm</keyword>
<keyword id="KW-0368">Histidine biosynthesis</keyword>
<keyword id="KW-0456">Lyase</keyword>
<protein>
    <recommendedName>
        <fullName evidence="1">Imidazole glycerol phosphate synthase subunit HisF</fullName>
        <ecNumber evidence="1">4.3.2.10</ecNumber>
    </recommendedName>
    <alternativeName>
        <fullName evidence="1">IGP synthase cyclase subunit</fullName>
    </alternativeName>
    <alternativeName>
        <fullName evidence="1">IGP synthase subunit HisF</fullName>
    </alternativeName>
    <alternativeName>
        <fullName evidence="1">ImGP synthase subunit HisF</fullName>
        <shortName evidence="1">IGPS subunit HisF</shortName>
    </alternativeName>
</protein>
<reference key="1">
    <citation type="journal article" date="2009" name="J. Bacteriol.">
        <title>Complete and draft genome sequences of six members of the Aquificales.</title>
        <authorList>
            <person name="Reysenbach A.-L."/>
            <person name="Hamamura N."/>
            <person name="Podar M."/>
            <person name="Griffiths E."/>
            <person name="Ferreira S."/>
            <person name="Hochstein R."/>
            <person name="Heidelberg J."/>
            <person name="Johnson J."/>
            <person name="Mead D."/>
            <person name="Pohorille A."/>
            <person name="Sarmiento M."/>
            <person name="Schweighofer K."/>
            <person name="Seshadri R."/>
            <person name="Voytek M.A."/>
        </authorList>
    </citation>
    <scope>NUCLEOTIDE SEQUENCE [LARGE SCALE GENOMIC DNA]</scope>
    <source>
        <strain>YO3AOP1</strain>
    </source>
</reference>
<proteinExistence type="inferred from homology"/>
<comment type="function">
    <text evidence="1">IGPS catalyzes the conversion of PRFAR and glutamine to IGP, AICAR and glutamate. The HisF subunit catalyzes the cyclization activity that produces IGP and AICAR from PRFAR using the ammonia provided by the HisH subunit.</text>
</comment>
<comment type="catalytic activity">
    <reaction evidence="1">
        <text>5-[(5-phospho-1-deoxy-D-ribulos-1-ylimino)methylamino]-1-(5-phospho-beta-D-ribosyl)imidazole-4-carboxamide + L-glutamine = D-erythro-1-(imidazol-4-yl)glycerol 3-phosphate + 5-amino-1-(5-phospho-beta-D-ribosyl)imidazole-4-carboxamide + L-glutamate + H(+)</text>
        <dbReference type="Rhea" id="RHEA:24793"/>
        <dbReference type="ChEBI" id="CHEBI:15378"/>
        <dbReference type="ChEBI" id="CHEBI:29985"/>
        <dbReference type="ChEBI" id="CHEBI:58278"/>
        <dbReference type="ChEBI" id="CHEBI:58359"/>
        <dbReference type="ChEBI" id="CHEBI:58475"/>
        <dbReference type="ChEBI" id="CHEBI:58525"/>
        <dbReference type="EC" id="4.3.2.10"/>
    </reaction>
</comment>
<comment type="pathway">
    <text evidence="1">Amino-acid biosynthesis; L-histidine biosynthesis; L-histidine from 5-phospho-alpha-D-ribose 1-diphosphate: step 5/9.</text>
</comment>
<comment type="subunit">
    <text evidence="1">Heterodimer of HisH and HisF.</text>
</comment>
<comment type="subcellular location">
    <subcellularLocation>
        <location evidence="1">Cytoplasm</location>
    </subcellularLocation>
</comment>
<comment type="similarity">
    <text evidence="1">Belongs to the HisA/HisF family.</text>
</comment>
<evidence type="ECO:0000255" key="1">
    <source>
        <dbReference type="HAMAP-Rule" id="MF_01013"/>
    </source>
</evidence>
<dbReference type="EC" id="4.3.2.10" evidence="1"/>
<dbReference type="EMBL" id="CP001080">
    <property type="protein sequence ID" value="ACD66651.1"/>
    <property type="molecule type" value="Genomic_DNA"/>
</dbReference>
<dbReference type="RefSeq" id="WP_012459720.1">
    <property type="nucleotide sequence ID" value="NC_010730.1"/>
</dbReference>
<dbReference type="SMR" id="B2V9M8"/>
<dbReference type="STRING" id="436114.SYO3AOP1_1032"/>
<dbReference type="KEGG" id="sul:SYO3AOP1_1032"/>
<dbReference type="eggNOG" id="COG0107">
    <property type="taxonomic scope" value="Bacteria"/>
</dbReference>
<dbReference type="HOGENOM" id="CLU_048577_4_0_0"/>
<dbReference type="UniPathway" id="UPA00031">
    <property type="reaction ID" value="UER00010"/>
</dbReference>
<dbReference type="GO" id="GO:0005737">
    <property type="term" value="C:cytoplasm"/>
    <property type="evidence" value="ECO:0007669"/>
    <property type="project" value="UniProtKB-SubCell"/>
</dbReference>
<dbReference type="GO" id="GO:0000107">
    <property type="term" value="F:imidazoleglycerol-phosphate synthase activity"/>
    <property type="evidence" value="ECO:0007669"/>
    <property type="project" value="UniProtKB-UniRule"/>
</dbReference>
<dbReference type="GO" id="GO:0016829">
    <property type="term" value="F:lyase activity"/>
    <property type="evidence" value="ECO:0007669"/>
    <property type="project" value="UniProtKB-KW"/>
</dbReference>
<dbReference type="GO" id="GO:0000105">
    <property type="term" value="P:L-histidine biosynthetic process"/>
    <property type="evidence" value="ECO:0007669"/>
    <property type="project" value="UniProtKB-UniRule"/>
</dbReference>
<dbReference type="CDD" id="cd04731">
    <property type="entry name" value="HisF"/>
    <property type="match status" value="1"/>
</dbReference>
<dbReference type="FunFam" id="3.20.20.70:FF:000006">
    <property type="entry name" value="Imidazole glycerol phosphate synthase subunit HisF"/>
    <property type="match status" value="1"/>
</dbReference>
<dbReference type="Gene3D" id="3.20.20.70">
    <property type="entry name" value="Aldolase class I"/>
    <property type="match status" value="1"/>
</dbReference>
<dbReference type="HAMAP" id="MF_01013">
    <property type="entry name" value="HisF"/>
    <property type="match status" value="1"/>
</dbReference>
<dbReference type="InterPro" id="IPR013785">
    <property type="entry name" value="Aldolase_TIM"/>
</dbReference>
<dbReference type="InterPro" id="IPR006062">
    <property type="entry name" value="His_biosynth"/>
</dbReference>
<dbReference type="InterPro" id="IPR004651">
    <property type="entry name" value="HisF"/>
</dbReference>
<dbReference type="InterPro" id="IPR050064">
    <property type="entry name" value="IGPS_HisA/HisF"/>
</dbReference>
<dbReference type="InterPro" id="IPR011060">
    <property type="entry name" value="RibuloseP-bd_barrel"/>
</dbReference>
<dbReference type="NCBIfam" id="TIGR00735">
    <property type="entry name" value="hisF"/>
    <property type="match status" value="1"/>
</dbReference>
<dbReference type="PANTHER" id="PTHR21235:SF2">
    <property type="entry name" value="IMIDAZOLE GLYCEROL PHOSPHATE SYNTHASE HISHF"/>
    <property type="match status" value="1"/>
</dbReference>
<dbReference type="PANTHER" id="PTHR21235">
    <property type="entry name" value="IMIDAZOLE GLYCEROL PHOSPHATE SYNTHASE SUBUNIT HISF/H IGP SYNTHASE SUBUNIT HISF/H"/>
    <property type="match status" value="1"/>
</dbReference>
<dbReference type="Pfam" id="PF00977">
    <property type="entry name" value="His_biosynth"/>
    <property type="match status" value="1"/>
</dbReference>
<dbReference type="SUPFAM" id="SSF51366">
    <property type="entry name" value="Ribulose-phoshate binding barrel"/>
    <property type="match status" value="1"/>
</dbReference>
<gene>
    <name evidence="1" type="primary">hisF</name>
    <name type="ordered locus">SYO3AOP1_1032</name>
</gene>
<accession>B2V9M8</accession>